<name>RS4_ALIF1</name>
<reference key="1">
    <citation type="journal article" date="2005" name="Proc. Natl. Acad. Sci. U.S.A.">
        <title>Complete genome sequence of Vibrio fischeri: a symbiotic bacterium with pathogenic congeners.</title>
        <authorList>
            <person name="Ruby E.G."/>
            <person name="Urbanowski M."/>
            <person name="Campbell J."/>
            <person name="Dunn A."/>
            <person name="Faini M."/>
            <person name="Gunsalus R."/>
            <person name="Lostroh P."/>
            <person name="Lupp C."/>
            <person name="McCann J."/>
            <person name="Millikan D."/>
            <person name="Schaefer A."/>
            <person name="Stabb E."/>
            <person name="Stevens A."/>
            <person name="Visick K."/>
            <person name="Whistler C."/>
            <person name="Greenberg E.P."/>
        </authorList>
    </citation>
    <scope>NUCLEOTIDE SEQUENCE [LARGE SCALE GENOMIC DNA]</scope>
    <source>
        <strain>ATCC 700601 / ES114</strain>
    </source>
</reference>
<gene>
    <name evidence="1" type="primary">rpsD</name>
    <name type="ordered locus">VF_0261</name>
</gene>
<proteinExistence type="inferred from homology"/>
<comment type="function">
    <text evidence="1">One of the primary rRNA binding proteins, it binds directly to 16S rRNA where it nucleates assembly of the body of the 30S subunit.</text>
</comment>
<comment type="function">
    <text evidence="1">With S5 and S12 plays an important role in translational accuracy.</text>
</comment>
<comment type="subunit">
    <text evidence="1">Part of the 30S ribosomal subunit. Contacts protein S5. The interaction surface between S4 and S5 is involved in control of translational fidelity.</text>
</comment>
<comment type="similarity">
    <text evidence="1">Belongs to the universal ribosomal protein uS4 family.</text>
</comment>
<keyword id="KW-1185">Reference proteome</keyword>
<keyword id="KW-0687">Ribonucleoprotein</keyword>
<keyword id="KW-0689">Ribosomal protein</keyword>
<keyword id="KW-0694">RNA-binding</keyword>
<keyword id="KW-0699">rRNA-binding</keyword>
<organism>
    <name type="scientific">Aliivibrio fischeri (strain ATCC 700601 / ES114)</name>
    <name type="common">Vibrio fischeri</name>
    <dbReference type="NCBI Taxonomy" id="312309"/>
    <lineage>
        <taxon>Bacteria</taxon>
        <taxon>Pseudomonadati</taxon>
        <taxon>Pseudomonadota</taxon>
        <taxon>Gammaproteobacteria</taxon>
        <taxon>Vibrionales</taxon>
        <taxon>Vibrionaceae</taxon>
        <taxon>Aliivibrio</taxon>
    </lineage>
</organism>
<dbReference type="EMBL" id="CP000020">
    <property type="protein sequence ID" value="AAW84756.1"/>
    <property type="molecule type" value="Genomic_DNA"/>
</dbReference>
<dbReference type="RefSeq" id="WP_005417269.1">
    <property type="nucleotide sequence ID" value="NZ_CAWLES010000001.1"/>
</dbReference>
<dbReference type="RefSeq" id="YP_203644.1">
    <property type="nucleotide sequence ID" value="NC_006840.2"/>
</dbReference>
<dbReference type="SMR" id="Q5E890"/>
<dbReference type="STRING" id="312309.VF_0261"/>
<dbReference type="EnsemblBacteria" id="AAW84756">
    <property type="protein sequence ID" value="AAW84756"/>
    <property type="gene ID" value="VF_0261"/>
</dbReference>
<dbReference type="GeneID" id="54162882"/>
<dbReference type="KEGG" id="vfi:VF_0261"/>
<dbReference type="PATRIC" id="fig|312309.11.peg.256"/>
<dbReference type="eggNOG" id="COG0522">
    <property type="taxonomic scope" value="Bacteria"/>
</dbReference>
<dbReference type="HOGENOM" id="CLU_092403_0_2_6"/>
<dbReference type="OrthoDB" id="9803672at2"/>
<dbReference type="Proteomes" id="UP000000537">
    <property type="component" value="Chromosome I"/>
</dbReference>
<dbReference type="GO" id="GO:0015935">
    <property type="term" value="C:small ribosomal subunit"/>
    <property type="evidence" value="ECO:0007669"/>
    <property type="project" value="InterPro"/>
</dbReference>
<dbReference type="GO" id="GO:0019843">
    <property type="term" value="F:rRNA binding"/>
    <property type="evidence" value="ECO:0007669"/>
    <property type="project" value="UniProtKB-UniRule"/>
</dbReference>
<dbReference type="GO" id="GO:0003735">
    <property type="term" value="F:structural constituent of ribosome"/>
    <property type="evidence" value="ECO:0007669"/>
    <property type="project" value="InterPro"/>
</dbReference>
<dbReference type="GO" id="GO:0042274">
    <property type="term" value="P:ribosomal small subunit biogenesis"/>
    <property type="evidence" value="ECO:0007669"/>
    <property type="project" value="TreeGrafter"/>
</dbReference>
<dbReference type="GO" id="GO:0006412">
    <property type="term" value="P:translation"/>
    <property type="evidence" value="ECO:0007669"/>
    <property type="project" value="UniProtKB-UniRule"/>
</dbReference>
<dbReference type="CDD" id="cd00165">
    <property type="entry name" value="S4"/>
    <property type="match status" value="1"/>
</dbReference>
<dbReference type="FunFam" id="1.10.1050.10:FF:000001">
    <property type="entry name" value="30S ribosomal protein S4"/>
    <property type="match status" value="1"/>
</dbReference>
<dbReference type="FunFam" id="3.10.290.10:FF:000001">
    <property type="entry name" value="30S ribosomal protein S4"/>
    <property type="match status" value="1"/>
</dbReference>
<dbReference type="Gene3D" id="1.10.1050.10">
    <property type="entry name" value="Ribosomal Protein S4 Delta 41, Chain A, domain 1"/>
    <property type="match status" value="1"/>
</dbReference>
<dbReference type="Gene3D" id="3.10.290.10">
    <property type="entry name" value="RNA-binding S4 domain"/>
    <property type="match status" value="1"/>
</dbReference>
<dbReference type="HAMAP" id="MF_01306_B">
    <property type="entry name" value="Ribosomal_uS4_B"/>
    <property type="match status" value="1"/>
</dbReference>
<dbReference type="InterPro" id="IPR022801">
    <property type="entry name" value="Ribosomal_uS4"/>
</dbReference>
<dbReference type="InterPro" id="IPR005709">
    <property type="entry name" value="Ribosomal_uS4_bac-type"/>
</dbReference>
<dbReference type="InterPro" id="IPR018079">
    <property type="entry name" value="Ribosomal_uS4_CS"/>
</dbReference>
<dbReference type="InterPro" id="IPR001912">
    <property type="entry name" value="Ribosomal_uS4_N"/>
</dbReference>
<dbReference type="InterPro" id="IPR002942">
    <property type="entry name" value="S4_RNA-bd"/>
</dbReference>
<dbReference type="InterPro" id="IPR036986">
    <property type="entry name" value="S4_RNA-bd_sf"/>
</dbReference>
<dbReference type="NCBIfam" id="NF003717">
    <property type="entry name" value="PRK05327.1"/>
    <property type="match status" value="1"/>
</dbReference>
<dbReference type="NCBIfam" id="TIGR01017">
    <property type="entry name" value="rpsD_bact"/>
    <property type="match status" value="1"/>
</dbReference>
<dbReference type="PANTHER" id="PTHR11831">
    <property type="entry name" value="30S 40S RIBOSOMAL PROTEIN"/>
    <property type="match status" value="1"/>
</dbReference>
<dbReference type="PANTHER" id="PTHR11831:SF4">
    <property type="entry name" value="SMALL RIBOSOMAL SUBUNIT PROTEIN US4M"/>
    <property type="match status" value="1"/>
</dbReference>
<dbReference type="Pfam" id="PF00163">
    <property type="entry name" value="Ribosomal_S4"/>
    <property type="match status" value="1"/>
</dbReference>
<dbReference type="Pfam" id="PF01479">
    <property type="entry name" value="S4"/>
    <property type="match status" value="1"/>
</dbReference>
<dbReference type="SMART" id="SM01390">
    <property type="entry name" value="Ribosomal_S4"/>
    <property type="match status" value="1"/>
</dbReference>
<dbReference type="SMART" id="SM00363">
    <property type="entry name" value="S4"/>
    <property type="match status" value="1"/>
</dbReference>
<dbReference type="SUPFAM" id="SSF55174">
    <property type="entry name" value="Alpha-L RNA-binding motif"/>
    <property type="match status" value="1"/>
</dbReference>
<dbReference type="PROSITE" id="PS00632">
    <property type="entry name" value="RIBOSOMAL_S4"/>
    <property type="match status" value="1"/>
</dbReference>
<dbReference type="PROSITE" id="PS50889">
    <property type="entry name" value="S4"/>
    <property type="match status" value="1"/>
</dbReference>
<feature type="chain" id="PRO_0000228938" description="Small ribosomal subunit protein uS4">
    <location>
        <begin position="1"/>
        <end position="206"/>
    </location>
</feature>
<feature type="domain" description="S4 RNA-binding" evidence="1">
    <location>
        <begin position="96"/>
        <end position="158"/>
    </location>
</feature>
<accession>Q5E890</accession>
<evidence type="ECO:0000255" key="1">
    <source>
        <dbReference type="HAMAP-Rule" id="MF_01306"/>
    </source>
</evidence>
<evidence type="ECO:0000305" key="2"/>
<protein>
    <recommendedName>
        <fullName evidence="1">Small ribosomal subunit protein uS4</fullName>
    </recommendedName>
    <alternativeName>
        <fullName evidence="2">30S ribosomal protein S4</fullName>
    </alternativeName>
</protein>
<sequence length="206" mass="23372">MARYLGPKLKLSRREGTDLFLKSGVRAIDTKCKIDNAPGVHGARRGRLSEYGVQLREKQKVRRMYGVLEKQFRNYYKDAARLKGNTGENLLQLLEGRLDNVVYRMGFGATRAESRQLVSHKSILVNGKVVNVPSFKVAANDVVSIREKAKQQSRIKAALEVAEQREKPTWIEVDAGKMEGTFKRLPERSDLSADINEHLIVELYSK</sequence>